<accession>P29310</accession>
<accession>A4UZB2</accession>
<accession>A4UZB3</accession>
<accession>C1C593</accession>
<accession>C9QP27</accession>
<accession>O01665</accession>
<accession>Q0E9D5</accession>
<accession>Q0E9D6</accession>
<accession>Q0E9D7</accession>
<accession>Q8IGB9</accession>
<accession>Q8MKV5</accession>
<accession>Q9V5G6</accession>
<evidence type="ECO:0000250" key="1"/>
<evidence type="ECO:0000269" key="2">
    <source>
    </source>
</evidence>
<evidence type="ECO:0000269" key="3">
    <source>
    </source>
</evidence>
<evidence type="ECO:0000269" key="4">
    <source>
    </source>
</evidence>
<evidence type="ECO:0000269" key="5">
    <source>
    </source>
</evidence>
<evidence type="ECO:0000269" key="6">
    <source>
    </source>
</evidence>
<evidence type="ECO:0000269" key="7">
    <source>
    </source>
</evidence>
<evidence type="ECO:0000269" key="8">
    <source>
    </source>
</evidence>
<evidence type="ECO:0000303" key="9">
    <source>
    </source>
</evidence>
<evidence type="ECO:0000303" key="10">
    <source ref="6"/>
</evidence>
<evidence type="ECO:0000305" key="11"/>
<name>1433Z_DROME</name>
<gene>
    <name type="primary">14-3-3zeta</name>
    <name type="synonym">14-3-3</name>
    <name type="synonym">14-3-3EZ</name>
    <name type="synonym">leo</name>
    <name type="synonym">THAP</name>
    <name type="ORF">CG17870</name>
</gene>
<proteinExistence type="evidence at protein level"/>
<reference key="1">
    <citation type="journal article" date="1992" name="Gene">
        <title>Characterization of a Drosophila melanogaster gene similar to the mammalian genes encoding the tyrosine/tryptophan hydroxylase activator and protein kinase C inhibitor proteins.</title>
        <authorList>
            <person name="Swanson K.D."/>
            <person name="Ganguly R."/>
        </authorList>
    </citation>
    <scope>NUCLEOTIDE SEQUENCE [MRNA] (ISOFORM VI)</scope>
    <source>
        <strain>Oregon-R</strain>
        <tissue>Head</tissue>
    </source>
</reference>
<reference key="2">
    <citation type="journal article" date="1997" name="Genes Dev.">
        <title>Requirement for Drosophila 14-3-3 zeta in Raf-dependent photoreceptor development.</title>
        <authorList>
            <person name="Kockel L."/>
            <person name="Vorbrueggen G."/>
            <person name="Jaeckle H."/>
            <person name="Mlodzik M."/>
            <person name="Bohmann D."/>
        </authorList>
    </citation>
    <scope>NUCLEOTIDE SEQUENCE [GENOMIC DNA]</scope>
    <scope>FUNCTION</scope>
    <scope>ALTERNATIVE SPLICING (ISOFORMS VI AND VI')</scope>
    <source>
        <strain>Oregon-R</strain>
    </source>
</reference>
<reference key="3">
    <citation type="journal article" date="2000" name="Science">
        <title>The genome sequence of Drosophila melanogaster.</title>
        <authorList>
            <person name="Adams M.D."/>
            <person name="Celniker S.E."/>
            <person name="Holt R.A."/>
            <person name="Evans C.A."/>
            <person name="Gocayne J.D."/>
            <person name="Amanatides P.G."/>
            <person name="Scherer S.E."/>
            <person name="Li P.W."/>
            <person name="Hoskins R.A."/>
            <person name="Galle R.F."/>
            <person name="George R.A."/>
            <person name="Lewis S.E."/>
            <person name="Richards S."/>
            <person name="Ashburner M."/>
            <person name="Henderson S.N."/>
            <person name="Sutton G.G."/>
            <person name="Wortman J.R."/>
            <person name="Yandell M.D."/>
            <person name="Zhang Q."/>
            <person name="Chen L.X."/>
            <person name="Brandon R.C."/>
            <person name="Rogers Y.-H.C."/>
            <person name="Blazej R.G."/>
            <person name="Champe M."/>
            <person name="Pfeiffer B.D."/>
            <person name="Wan K.H."/>
            <person name="Doyle C."/>
            <person name="Baxter E.G."/>
            <person name="Helt G."/>
            <person name="Nelson C.R."/>
            <person name="Miklos G.L.G."/>
            <person name="Abril J.F."/>
            <person name="Agbayani A."/>
            <person name="An H.-J."/>
            <person name="Andrews-Pfannkoch C."/>
            <person name="Baldwin D."/>
            <person name="Ballew R.M."/>
            <person name="Basu A."/>
            <person name="Baxendale J."/>
            <person name="Bayraktaroglu L."/>
            <person name="Beasley E.M."/>
            <person name="Beeson K.Y."/>
            <person name="Benos P.V."/>
            <person name="Berman B.P."/>
            <person name="Bhandari D."/>
            <person name="Bolshakov S."/>
            <person name="Borkova D."/>
            <person name="Botchan M.R."/>
            <person name="Bouck J."/>
            <person name="Brokstein P."/>
            <person name="Brottier P."/>
            <person name="Burtis K.C."/>
            <person name="Busam D.A."/>
            <person name="Butler H."/>
            <person name="Cadieu E."/>
            <person name="Center A."/>
            <person name="Chandra I."/>
            <person name="Cherry J.M."/>
            <person name="Cawley S."/>
            <person name="Dahlke C."/>
            <person name="Davenport L.B."/>
            <person name="Davies P."/>
            <person name="de Pablos B."/>
            <person name="Delcher A."/>
            <person name="Deng Z."/>
            <person name="Mays A.D."/>
            <person name="Dew I."/>
            <person name="Dietz S.M."/>
            <person name="Dodson K."/>
            <person name="Doup L.E."/>
            <person name="Downes M."/>
            <person name="Dugan-Rocha S."/>
            <person name="Dunkov B.C."/>
            <person name="Dunn P."/>
            <person name="Durbin K.J."/>
            <person name="Evangelista C.C."/>
            <person name="Ferraz C."/>
            <person name="Ferriera S."/>
            <person name="Fleischmann W."/>
            <person name="Fosler C."/>
            <person name="Gabrielian A.E."/>
            <person name="Garg N.S."/>
            <person name="Gelbart W.M."/>
            <person name="Glasser K."/>
            <person name="Glodek A."/>
            <person name="Gong F."/>
            <person name="Gorrell J.H."/>
            <person name="Gu Z."/>
            <person name="Guan P."/>
            <person name="Harris M."/>
            <person name="Harris N.L."/>
            <person name="Harvey D.A."/>
            <person name="Heiman T.J."/>
            <person name="Hernandez J.R."/>
            <person name="Houck J."/>
            <person name="Hostin D."/>
            <person name="Houston K.A."/>
            <person name="Howland T.J."/>
            <person name="Wei M.-H."/>
            <person name="Ibegwam C."/>
            <person name="Jalali M."/>
            <person name="Kalush F."/>
            <person name="Karpen G.H."/>
            <person name="Ke Z."/>
            <person name="Kennison J.A."/>
            <person name="Ketchum K.A."/>
            <person name="Kimmel B.E."/>
            <person name="Kodira C.D."/>
            <person name="Kraft C.L."/>
            <person name="Kravitz S."/>
            <person name="Kulp D."/>
            <person name="Lai Z."/>
            <person name="Lasko P."/>
            <person name="Lei Y."/>
            <person name="Levitsky A.A."/>
            <person name="Li J.H."/>
            <person name="Li Z."/>
            <person name="Liang Y."/>
            <person name="Lin X."/>
            <person name="Liu X."/>
            <person name="Mattei B."/>
            <person name="McIntosh T.C."/>
            <person name="McLeod M.P."/>
            <person name="McPherson D."/>
            <person name="Merkulov G."/>
            <person name="Milshina N.V."/>
            <person name="Mobarry C."/>
            <person name="Morris J."/>
            <person name="Moshrefi A."/>
            <person name="Mount S.M."/>
            <person name="Moy M."/>
            <person name="Murphy B."/>
            <person name="Murphy L."/>
            <person name="Muzny D.M."/>
            <person name="Nelson D.L."/>
            <person name="Nelson D.R."/>
            <person name="Nelson K.A."/>
            <person name="Nixon K."/>
            <person name="Nusskern D.R."/>
            <person name="Pacleb J.M."/>
            <person name="Palazzolo M."/>
            <person name="Pittman G.S."/>
            <person name="Pan S."/>
            <person name="Pollard J."/>
            <person name="Puri V."/>
            <person name="Reese M.G."/>
            <person name="Reinert K."/>
            <person name="Remington K."/>
            <person name="Saunders R.D.C."/>
            <person name="Scheeler F."/>
            <person name="Shen H."/>
            <person name="Shue B.C."/>
            <person name="Siden-Kiamos I."/>
            <person name="Simpson M."/>
            <person name="Skupski M.P."/>
            <person name="Smith T.J."/>
            <person name="Spier E."/>
            <person name="Spradling A.C."/>
            <person name="Stapleton M."/>
            <person name="Strong R."/>
            <person name="Sun E."/>
            <person name="Svirskas R."/>
            <person name="Tector C."/>
            <person name="Turner R."/>
            <person name="Venter E."/>
            <person name="Wang A.H."/>
            <person name="Wang X."/>
            <person name="Wang Z.-Y."/>
            <person name="Wassarman D.A."/>
            <person name="Weinstock G.M."/>
            <person name="Weissenbach J."/>
            <person name="Williams S.M."/>
            <person name="Woodage T."/>
            <person name="Worley K.C."/>
            <person name="Wu D."/>
            <person name="Yang S."/>
            <person name="Yao Q.A."/>
            <person name="Ye J."/>
            <person name="Yeh R.-F."/>
            <person name="Zaveri J.S."/>
            <person name="Zhan M."/>
            <person name="Zhang G."/>
            <person name="Zhao Q."/>
            <person name="Zheng L."/>
            <person name="Zheng X.H."/>
            <person name="Zhong F.N."/>
            <person name="Zhong W."/>
            <person name="Zhou X."/>
            <person name="Zhu S.C."/>
            <person name="Zhu X."/>
            <person name="Smith H.O."/>
            <person name="Gibbs R.A."/>
            <person name="Myers E.W."/>
            <person name="Rubin G.M."/>
            <person name="Venter J.C."/>
        </authorList>
    </citation>
    <scope>NUCLEOTIDE SEQUENCE [LARGE SCALE GENOMIC DNA]</scope>
    <source>
        <strain>Berkeley</strain>
    </source>
</reference>
<reference key="4">
    <citation type="journal article" date="2002" name="Genome Biol.">
        <title>Annotation of the Drosophila melanogaster euchromatic genome: a systematic review.</title>
        <authorList>
            <person name="Misra S."/>
            <person name="Crosby M.A."/>
            <person name="Mungall C.J."/>
            <person name="Matthews B.B."/>
            <person name="Campbell K.S."/>
            <person name="Hradecky P."/>
            <person name="Huang Y."/>
            <person name="Kaminker J.S."/>
            <person name="Millburn G.H."/>
            <person name="Prochnik S.E."/>
            <person name="Smith C.D."/>
            <person name="Tupy J.L."/>
            <person name="Whitfield E.J."/>
            <person name="Bayraktaroglu L."/>
            <person name="Berman B.P."/>
            <person name="Bettencourt B.R."/>
            <person name="Celniker S.E."/>
            <person name="de Grey A.D.N.J."/>
            <person name="Drysdale R.A."/>
            <person name="Harris N.L."/>
            <person name="Richter J."/>
            <person name="Russo S."/>
            <person name="Schroeder A.J."/>
            <person name="Shu S.Q."/>
            <person name="Stapleton M."/>
            <person name="Yamada C."/>
            <person name="Ashburner M."/>
            <person name="Gelbart W.M."/>
            <person name="Rubin G.M."/>
            <person name="Lewis S.E."/>
        </authorList>
    </citation>
    <scope>GENOME REANNOTATION</scope>
    <scope>ALTERNATIVE SPLICING</scope>
    <source>
        <strain>Berkeley</strain>
    </source>
</reference>
<reference key="5">
    <citation type="journal article" date="2002" name="Genome Biol.">
        <title>A Drosophila full-length cDNA resource.</title>
        <authorList>
            <person name="Stapleton M."/>
            <person name="Carlson J.W."/>
            <person name="Brokstein P."/>
            <person name="Yu C."/>
            <person name="Champe M."/>
            <person name="George R.A."/>
            <person name="Guarin H."/>
            <person name="Kronmiller B."/>
            <person name="Pacleb J.M."/>
            <person name="Park S."/>
            <person name="Wan K.H."/>
            <person name="Rubin G.M."/>
            <person name="Celniker S.E."/>
        </authorList>
    </citation>
    <scope>NUCLEOTIDE SEQUENCE [LARGE SCALE MRNA] (ISOFORM C)</scope>
    <source>
        <strain>Berkeley</strain>
        <tissue>Head</tissue>
    </source>
</reference>
<reference key="6">
    <citation type="submission" date="2009-10" db="EMBL/GenBank/DDBJ databases">
        <authorList>
            <person name="Carlson J.W."/>
            <person name="Booth B."/>
            <person name="Frise E."/>
            <person name="Park S."/>
            <person name="Wan K.H."/>
            <person name="Yu C."/>
            <person name="Celniker S.E."/>
        </authorList>
    </citation>
    <scope>NUCLEOTIDE SEQUENCE [LARGE SCALE MRNA] (ISOFORMS VI AND VI')</scope>
    <source>
        <strain>Berkeley</strain>
        <tissue>Ovary</tissue>
    </source>
</reference>
<reference key="7">
    <citation type="journal article" date="1999" name="Neuron">
        <title>A dynamically regulated 14-3-3, Slob, and Slowpoke potassium channel complex in Drosophila presynaptic nerve terminals.</title>
        <authorList>
            <person name="Zhou Y."/>
            <person name="Schopperle W.M."/>
            <person name="Murrey H."/>
            <person name="Jaramillo A."/>
            <person name="Dagan D."/>
            <person name="Griffith L.C."/>
            <person name="Levitan I.B."/>
        </authorList>
    </citation>
    <scope>FUNCTION</scope>
    <scope>INTERACTION WITH SLOB</scope>
</reference>
<reference key="8">
    <citation type="journal article" date="2003" name="J. Biol. Chem.">
        <title>Monomeric 14-3-3 protein is sufficient to modulate the activity of the Drosophila slowpoke calcium-dependent potassium channel.</title>
        <authorList>
            <person name="Zhou Y."/>
            <person name="Reddy S."/>
            <person name="Murrey H."/>
            <person name="Fei H."/>
            <person name="Levitan I.B."/>
        </authorList>
    </citation>
    <scope>HOMODIMERIZATION</scope>
    <scope>MUTAGENESIS OF ARG-59 AND ARG-63</scope>
</reference>
<reference key="9">
    <citation type="journal article" date="2008" name="Development">
        <title>In vivo regulation of Yorkie phosphorylation and localization.</title>
        <authorList>
            <person name="Oh H."/>
            <person name="Irvine K.D."/>
        </authorList>
    </citation>
    <scope>INTERACTION WITH YKI</scope>
</reference>
<reference key="10">
    <citation type="journal article" date="2010" name="Dev. Biol.">
        <title>Hippo signaling regulates Yorkie nuclear localization and activity through 14-3-3 dependent and independent mechanisms.</title>
        <authorList>
            <person name="Ren F."/>
            <person name="Zhang L."/>
            <person name="Jiang J."/>
        </authorList>
    </citation>
    <scope>FUNCTION</scope>
    <scope>INTERACTION WITH YKI</scope>
</reference>
<reference key="11">
    <citation type="journal article" date="2016" name="PLoS Biol.">
        <title>Hemotin, a regulator of phagocytosis encoded by a small ORF and conserved across metazoans.</title>
        <authorList>
            <person name="Pueyo J.I."/>
            <person name="Magny E.G."/>
            <person name="Sampson C.J."/>
            <person name="Amin U."/>
            <person name="Evans I.R."/>
            <person name="Bishop S.A."/>
            <person name="Couso J.P."/>
        </authorList>
    </citation>
    <scope>FUNCTION</scope>
    <scope>INTERACTION WITH HEMO</scope>
    <scope>SUBCELLULAR LOCATION</scope>
</reference>
<reference key="12">
    <citation type="journal article" date="2015" name="Dev. Cell">
        <title>REPTOR and REPTOR-BP regulate organismal metabolism and transcription downstream of TORC1.</title>
        <authorList>
            <person name="Tiebe M."/>
            <person name="Lutz M."/>
            <person name="De La Garza A."/>
            <person name="Buechling T."/>
            <person name="Boutros M."/>
            <person name="Teleman A.A."/>
        </authorList>
    </citation>
    <scope>INTERACTION WITH REPTOR</scope>
</reference>
<comment type="function">
    <text evidence="2 5 7 8">Required in Raf-dependent cell proliferation and photoreceptor differentiation during eye development (PubMed:9159395). Acts upstream of Raf and downstream of Ras, and is essential for viability (PubMed:9159395). Acts as a negative regulator of the slo calcium channel via its interaction with slo-binding protein slob (PubMed:10230800). Inhibits yki activity by restricting its nuclear localization (PubMed:19900439). Binds to and promotes the activity of phosphoinositide 3-kinase Pi3K68D which converts phosphatidylinositol to phosphatidylinositol-3-phosphate and promotes maturation of early endosomes (PubMed:27015288).</text>
</comment>
<comment type="subunit">
    <text evidence="2 3 4 5 6 7">Homodimer; homodimerization is not essential for modulating the activity of Slo (PubMed:12529354). Interacts with phosphorylated Slob; the interaction with Slob mediates an indirect interaction with Slo (PubMed:10230800). Interacts with phosphorylated yki (PubMed:18256197, PubMed:19900439). Interacts with hemo; this represses 14-3-3zeta activity which prevents the 14-3-3zeta-mediated activation of phosphoinositide 3-kinase Pi3K68D. This, in turn, inhibits the Pi3K68D-mediated conversion of phosphatidylinositol to phosphatidylinositol-3-phosphate and prevents progression of early endosomes through the maturation process which regulates subsequent steps of phagocytic processing (PubMed:27015288). Interacts with REPTOR (when phosphorylated), this interaction may assist the cytoplasmic retention of REPTOR (PubMed:25920570).</text>
</comment>
<comment type="interaction">
    <interactant intactId="EBI-198100">
        <id>P29310</id>
    </interactant>
    <interactant intactId="EBI-84891">
        <id>Q9VQ93</id>
        <label>sau</label>
    </interactant>
    <organismsDiffer>false</organismsDiffer>
    <experiments>3</experiments>
</comment>
<comment type="interaction">
    <interactant intactId="EBI-198100">
        <id>P29310</id>
    </interactant>
    <interactant intactId="EBI-142379">
        <id>Q8IPH9</id>
        <label>Slob</label>
    </interactant>
    <organismsDiffer>false</organismsDiffer>
    <experiments>4</experiments>
</comment>
<comment type="interaction">
    <interactant intactId="EBI-198120">
        <id>P29310-2</id>
    </interactant>
    <interactant intactId="EBI-102811">
        <id>Q9VS36</id>
        <label>mei-P22</label>
    </interactant>
    <organismsDiffer>false</organismsDiffer>
    <experiments>3</experiments>
</comment>
<comment type="subcellular location">
    <subcellularLocation>
        <location evidence="1">Cytoplasm</location>
    </subcellularLocation>
    <subcellularLocation>
        <location evidence="7">Early endosome</location>
    </subcellularLocation>
</comment>
<comment type="alternative products">
    <event type="alternative splicing"/>
    <isoform>
        <id>P29310-1</id>
        <name>VI</name>
        <name>D</name>
        <name>J</name>
        <sequence type="displayed"/>
    </isoform>
    <isoform>
        <id>P29310-2</id>
        <name>VI'</name>
        <name>A</name>
        <name>G</name>
        <name>H</name>
        <name>I</name>
        <sequence type="described" ref="VSP_000001"/>
    </isoform>
    <isoform>
        <id>P29310-3</id>
        <name>C</name>
        <name>F</name>
        <sequence type="described" ref="VSP_010303 VSP_010304"/>
    </isoform>
</comment>
<comment type="tissue specificity">
    <text>Predominantly expressed in the ventral nerve cord of the embryo, and in the neural tissues of the head. Also found in the region posterior to the morphogenetic furrow of the eye imaginal disk where cells differentiate as photoreceptors.</text>
</comment>
<comment type="developmental stage">
    <text>Expressed throughout all stages of embryonic and larval development.</text>
</comment>
<comment type="similarity">
    <text evidence="11">Belongs to the 14-3-3 family.</text>
</comment>
<feature type="chain" id="PRO_0000058651" description="14-3-3 protein zeta">
    <location>
        <begin position="1"/>
        <end position="248"/>
    </location>
</feature>
<feature type="splice variant" id="VSP_010303" description="In isoform C." evidence="9">
    <original>DDSQTAYQDAFDISKG</original>
    <variation>EDSKKAYQEAFDIAKT</variation>
    <location>
        <begin position="146"/>
        <end position="161"/>
    </location>
</feature>
<feature type="splice variant" id="VSP_000001" description="In isoform VI'." evidence="10">
    <original>QTAYQDAFDISKG</original>
    <variation>KNAYQEAFDIAKT</variation>
    <location>
        <begin position="149"/>
        <end position="161"/>
    </location>
</feature>
<feature type="splice variant" id="VSP_010304" description="In isoform C." evidence="9">
    <original>LNSPDKACQ</original>
    <variation>INSPARACH</variation>
    <location>
        <begin position="185"/>
        <end position="193"/>
    </location>
</feature>
<feature type="mutagenesis site" description="Abolishes homodimerization but not regulatory function on Slo; when associated with A-63." evidence="3">
    <original>R</original>
    <variation>A</variation>
    <location>
        <position position="59"/>
    </location>
</feature>
<feature type="mutagenesis site" description="Abolishes homodimerization but not regulatory function on Slo; when associated with A-59." evidence="3">
    <original>R</original>
    <variation>A</variation>
    <location>
        <position position="63"/>
    </location>
</feature>
<feature type="sequence conflict" description="In Ref. 5; AAN71617." evidence="11" ref="5">
    <original>K</original>
    <variation>E</variation>
    <location sequence="P29310-3">
        <position position="149"/>
    </location>
</feature>
<organism>
    <name type="scientific">Drosophila melanogaster</name>
    <name type="common">Fruit fly</name>
    <dbReference type="NCBI Taxonomy" id="7227"/>
    <lineage>
        <taxon>Eukaryota</taxon>
        <taxon>Metazoa</taxon>
        <taxon>Ecdysozoa</taxon>
        <taxon>Arthropoda</taxon>
        <taxon>Hexapoda</taxon>
        <taxon>Insecta</taxon>
        <taxon>Pterygota</taxon>
        <taxon>Neoptera</taxon>
        <taxon>Endopterygota</taxon>
        <taxon>Diptera</taxon>
        <taxon>Brachycera</taxon>
        <taxon>Muscomorpha</taxon>
        <taxon>Ephydroidea</taxon>
        <taxon>Drosophilidae</taxon>
        <taxon>Drosophila</taxon>
        <taxon>Sophophora</taxon>
    </lineage>
</organism>
<dbReference type="EMBL" id="M77518">
    <property type="protein sequence ID" value="AAA28324.1"/>
    <property type="molecule type" value="mRNA"/>
</dbReference>
<dbReference type="EMBL" id="Y12573">
    <property type="protein sequence ID" value="CAA73152.1"/>
    <property type="molecule type" value="Genomic_DNA"/>
</dbReference>
<dbReference type="EMBL" id="Y12573">
    <property type="protein sequence ID" value="CAA73153.1"/>
    <property type="molecule type" value="Genomic_DNA"/>
</dbReference>
<dbReference type="EMBL" id="AE013599">
    <property type="protein sequence ID" value="AAF58842.4"/>
    <property type="molecule type" value="Genomic_DNA"/>
</dbReference>
<dbReference type="EMBL" id="AE013599">
    <property type="protein sequence ID" value="AAF58843.3"/>
    <property type="molecule type" value="Genomic_DNA"/>
</dbReference>
<dbReference type="EMBL" id="AE013599">
    <property type="protein sequence ID" value="AAM71060.1"/>
    <property type="molecule type" value="Genomic_DNA"/>
</dbReference>
<dbReference type="EMBL" id="AE013599">
    <property type="protein sequence ID" value="AAM71063.2"/>
    <property type="molecule type" value="Genomic_DNA"/>
</dbReference>
<dbReference type="EMBL" id="AE013599">
    <property type="protein sequence ID" value="AAM71064.2"/>
    <property type="molecule type" value="Genomic_DNA"/>
</dbReference>
<dbReference type="EMBL" id="AE013599">
    <property type="protein sequence ID" value="AAS64884.1"/>
    <property type="molecule type" value="Genomic_DNA"/>
</dbReference>
<dbReference type="EMBL" id="AE013599">
    <property type="protein sequence ID" value="AAX52715.1"/>
    <property type="molecule type" value="Genomic_DNA"/>
</dbReference>
<dbReference type="EMBL" id="AE013599">
    <property type="protein sequence ID" value="AAX52716.1"/>
    <property type="molecule type" value="Genomic_DNA"/>
</dbReference>
<dbReference type="EMBL" id="BT001855">
    <property type="protein sequence ID" value="AAN71617.1"/>
    <property type="molecule type" value="mRNA"/>
</dbReference>
<dbReference type="EMBL" id="BT082022">
    <property type="protein sequence ID" value="ACO72859.1"/>
    <property type="molecule type" value="mRNA"/>
</dbReference>
<dbReference type="EMBL" id="BT088441">
    <property type="protein sequence ID" value="ACR44245.1"/>
    <property type="molecule type" value="mRNA"/>
</dbReference>
<dbReference type="EMBL" id="BT099909">
    <property type="protein sequence ID" value="ACX32980.1"/>
    <property type="molecule type" value="mRNA"/>
</dbReference>
<dbReference type="PIR" id="JC1122">
    <property type="entry name" value="JC1122"/>
</dbReference>
<dbReference type="RefSeq" id="NP_001014515.1">
    <molecule id="P29310-1"/>
    <property type="nucleotide sequence ID" value="NM_001014515.2"/>
</dbReference>
<dbReference type="RefSeq" id="NP_001014516.1">
    <molecule id="P29310-2"/>
    <property type="nucleotide sequence ID" value="NM_001014516.2"/>
</dbReference>
<dbReference type="RefSeq" id="NP_001260845.1">
    <molecule id="P29310-1"/>
    <property type="nucleotide sequence ID" value="NM_001273916.1"/>
</dbReference>
<dbReference type="RefSeq" id="NP_001260846.1">
    <molecule id="P29310-1"/>
    <property type="nucleotide sequence ID" value="NM_001273917.1"/>
</dbReference>
<dbReference type="RefSeq" id="NP_476885.2">
    <molecule id="P29310-1"/>
    <property type="nucleotide sequence ID" value="NM_057537.4"/>
</dbReference>
<dbReference type="RefSeq" id="NP_724884.1">
    <molecule id="P29310-1"/>
    <property type="nucleotide sequence ID" value="NM_165740.3"/>
</dbReference>
<dbReference type="RefSeq" id="NP_724885.1">
    <molecule id="P29310-2"/>
    <property type="nucleotide sequence ID" value="NM_165741.3"/>
</dbReference>
<dbReference type="RefSeq" id="NP_724886.1">
    <molecule id="P29310-2"/>
    <property type="nucleotide sequence ID" value="NM_165742.2"/>
</dbReference>
<dbReference type="RefSeq" id="NP_724887.2">
    <molecule id="P29310-3"/>
    <property type="nucleotide sequence ID" value="NM_165743.3"/>
</dbReference>
<dbReference type="RefSeq" id="NP_724888.2">
    <molecule id="P29310-3"/>
    <property type="nucleotide sequence ID" value="NM_165744.3"/>
</dbReference>
<dbReference type="RefSeq" id="NP_724889.2">
    <molecule id="P29310-2"/>
    <property type="nucleotide sequence ID" value="NM_165745.3"/>
</dbReference>
<dbReference type="RefSeq" id="NP_995792.1">
    <molecule id="P29310-2"/>
    <property type="nucleotide sequence ID" value="NM_206070.2"/>
</dbReference>
<dbReference type="SMR" id="P29310"/>
<dbReference type="BioGRID" id="61887">
    <property type="interactions" value="93"/>
</dbReference>
<dbReference type="DIP" id="DIP-17371N"/>
<dbReference type="FunCoup" id="P29310">
    <property type="interactions" value="1523"/>
</dbReference>
<dbReference type="IntAct" id="P29310">
    <property type="interactions" value="28"/>
</dbReference>
<dbReference type="STRING" id="7227.FBpp0087500"/>
<dbReference type="TCDB" id="8.A.98.1.1">
    <property type="family name" value="the 14-3-3 protein (14-3-3) family"/>
</dbReference>
<dbReference type="PaxDb" id="7227-FBpp0087500"/>
<dbReference type="DNASU" id="36059"/>
<dbReference type="EnsemblMetazoa" id="FBtr0088412">
    <molecule id="P29310-2"/>
    <property type="protein sequence ID" value="FBpp0087500"/>
    <property type="gene ID" value="FBgn0004907"/>
</dbReference>
<dbReference type="EnsemblMetazoa" id="FBtr0088413">
    <molecule id="P29310-2"/>
    <property type="protein sequence ID" value="FBpp0087501"/>
    <property type="gene ID" value="FBgn0004907"/>
</dbReference>
<dbReference type="EnsemblMetazoa" id="FBtr0088414">
    <molecule id="P29310-1"/>
    <property type="protein sequence ID" value="FBpp0087502"/>
    <property type="gene ID" value="FBgn0004907"/>
</dbReference>
<dbReference type="EnsemblMetazoa" id="FBtr0088415">
    <molecule id="P29310-1"/>
    <property type="protein sequence ID" value="FBpp0087503"/>
    <property type="gene ID" value="FBgn0004907"/>
</dbReference>
<dbReference type="EnsemblMetazoa" id="FBtr0088416">
    <molecule id="P29310-3"/>
    <property type="protein sequence ID" value="FBpp0087504"/>
    <property type="gene ID" value="FBgn0004907"/>
</dbReference>
<dbReference type="EnsemblMetazoa" id="FBtr0088417">
    <molecule id="P29310-2"/>
    <property type="protein sequence ID" value="FBpp0087505"/>
    <property type="gene ID" value="FBgn0004907"/>
</dbReference>
<dbReference type="EnsemblMetazoa" id="FBtr0088418">
    <molecule id="P29310-2"/>
    <property type="protein sequence ID" value="FBpp0089337"/>
    <property type="gene ID" value="FBgn0004907"/>
</dbReference>
<dbReference type="EnsemblMetazoa" id="FBtr0088419">
    <molecule id="P29310-3"/>
    <property type="protein sequence ID" value="FBpp0089338"/>
    <property type="gene ID" value="FBgn0004907"/>
</dbReference>
<dbReference type="EnsemblMetazoa" id="FBtr0100182">
    <molecule id="P29310-2"/>
    <property type="protein sequence ID" value="FBpp0099539"/>
    <property type="gene ID" value="FBgn0004907"/>
</dbReference>
<dbReference type="EnsemblMetazoa" id="FBtr0100183">
    <molecule id="P29310-1"/>
    <property type="protein sequence ID" value="FBpp0099540"/>
    <property type="gene ID" value="FBgn0004907"/>
</dbReference>
<dbReference type="EnsemblMetazoa" id="FBtr0332916">
    <molecule id="P29310-1"/>
    <property type="protein sequence ID" value="FBpp0305136"/>
    <property type="gene ID" value="FBgn0004907"/>
</dbReference>
<dbReference type="EnsemblMetazoa" id="FBtr0332917">
    <molecule id="P29310-1"/>
    <property type="protein sequence ID" value="FBpp0305137"/>
    <property type="gene ID" value="FBgn0004907"/>
</dbReference>
<dbReference type="GeneID" id="36059"/>
<dbReference type="KEGG" id="dme:Dmel_CG17870"/>
<dbReference type="AGR" id="FB:FBgn0004907"/>
<dbReference type="CTD" id="36059"/>
<dbReference type="FlyBase" id="FBgn0004907">
    <property type="gene designation" value="14-3-3zeta"/>
</dbReference>
<dbReference type="VEuPathDB" id="VectorBase:FBgn0004907"/>
<dbReference type="eggNOG" id="KOG0841">
    <property type="taxonomic scope" value="Eukaryota"/>
</dbReference>
<dbReference type="GeneTree" id="ENSGT01090000260040"/>
<dbReference type="HOGENOM" id="CLU_058290_1_0_1"/>
<dbReference type="InParanoid" id="P29310"/>
<dbReference type="OMA" id="AECKVFY"/>
<dbReference type="OrthoDB" id="10260625at2759"/>
<dbReference type="PhylomeDB" id="P29310"/>
<dbReference type="Reactome" id="R-DME-165159">
    <property type="pathway name" value="MTOR signalling"/>
</dbReference>
<dbReference type="Reactome" id="R-DME-166208">
    <property type="pathway name" value="mTORC1-mediated signalling"/>
</dbReference>
<dbReference type="Reactome" id="R-DME-170968">
    <property type="pathway name" value="Frs2-mediated activation"/>
</dbReference>
<dbReference type="Reactome" id="R-DME-3769402">
    <property type="pathway name" value="Deactivation of the beta-catenin transactivating complex"/>
</dbReference>
<dbReference type="Reactome" id="R-DME-390098">
    <property type="pathway name" value="Phosphorylation-dependent inhibition of YKI"/>
</dbReference>
<dbReference type="Reactome" id="R-DME-392517">
    <property type="pathway name" value="Rap1 signalling"/>
</dbReference>
<dbReference type="Reactome" id="R-DME-430116">
    <property type="pathway name" value="GP1b-IX-V activation signalling"/>
</dbReference>
<dbReference type="Reactome" id="R-DME-450385">
    <property type="pathway name" value="Butyrate Response Factor 1 (BRF1) binds and destabilizes mRNA"/>
</dbReference>
<dbReference type="Reactome" id="R-DME-450513">
    <property type="pathway name" value="Tristetraprolin (TTP, ZFP36) binds and destabilizes mRNA"/>
</dbReference>
<dbReference type="Reactome" id="R-DME-450604">
    <property type="pathway name" value="KSRP (KHSRP) binds and destabilizes mRNA"/>
</dbReference>
<dbReference type="Reactome" id="R-DME-5625740">
    <property type="pathway name" value="RHO GTPases activate PKNs"/>
</dbReference>
<dbReference type="Reactome" id="R-DME-5628897">
    <property type="pathway name" value="TP53 Regulates Metabolic Genes"/>
</dbReference>
<dbReference type="Reactome" id="R-DME-5673000">
    <property type="pathway name" value="RAF activation"/>
</dbReference>
<dbReference type="Reactome" id="R-DME-5674135">
    <property type="pathway name" value="MAP2K and MAPK activation"/>
</dbReference>
<dbReference type="Reactome" id="R-DME-5675221">
    <property type="pathway name" value="Negative regulation of MAPK pathway"/>
</dbReference>
<dbReference type="Reactome" id="R-DME-6804114">
    <property type="pathway name" value="TP53 Regulates Transcription of Genes Involved in G2 Cell Cycle Arrest"/>
</dbReference>
<dbReference type="Reactome" id="R-DME-75035">
    <property type="pathway name" value="Chk1/Chk2(Cds1) mediated inactivation of Cyclin B:Cdk1 complex"/>
</dbReference>
<dbReference type="Reactome" id="R-DME-9013700">
    <property type="pathway name" value="NOTCH4 Activation and Transmission of Signal to the Nucleus"/>
</dbReference>
<dbReference type="Reactome" id="R-DME-9614399">
    <property type="pathway name" value="Regulation of localization of FOXO transcription factors"/>
</dbReference>
<dbReference type="SignaLink" id="P29310"/>
<dbReference type="BioGRID-ORCS" id="36059">
    <property type="hits" value="1 hit in 3 CRISPR screens"/>
</dbReference>
<dbReference type="ChiTaRS" id="14-3-3zeta">
    <property type="organism name" value="fly"/>
</dbReference>
<dbReference type="GenomeRNAi" id="36059"/>
<dbReference type="PRO" id="PR:P29310"/>
<dbReference type="Proteomes" id="UP000000803">
    <property type="component" value="Chromosome 2R"/>
</dbReference>
<dbReference type="Bgee" id="FBgn0004907">
    <property type="expression patterns" value="Expressed in adult Kenyon cell in brain and 301 other cell types or tissues"/>
</dbReference>
<dbReference type="ExpressionAtlas" id="P29310">
    <property type="expression patterns" value="baseline and differential"/>
</dbReference>
<dbReference type="GO" id="GO:0005737">
    <property type="term" value="C:cytoplasm"/>
    <property type="evidence" value="ECO:0007005"/>
    <property type="project" value="FlyBase"/>
</dbReference>
<dbReference type="GO" id="GO:0005829">
    <property type="term" value="C:cytosol"/>
    <property type="evidence" value="ECO:0000304"/>
    <property type="project" value="Reactome"/>
</dbReference>
<dbReference type="GO" id="GO:0005769">
    <property type="term" value="C:early endosome"/>
    <property type="evidence" value="ECO:0007669"/>
    <property type="project" value="UniProtKB-SubCell"/>
</dbReference>
<dbReference type="GO" id="GO:0045172">
    <property type="term" value="C:germline ring canal"/>
    <property type="evidence" value="ECO:0000314"/>
    <property type="project" value="FlyBase"/>
</dbReference>
<dbReference type="GO" id="GO:0005739">
    <property type="term" value="C:mitochondrion"/>
    <property type="evidence" value="ECO:0000250"/>
    <property type="project" value="FlyBase"/>
</dbReference>
<dbReference type="GO" id="GO:0031965">
    <property type="term" value="C:nuclear membrane"/>
    <property type="evidence" value="ECO:0007005"/>
    <property type="project" value="FlyBase"/>
</dbReference>
<dbReference type="GO" id="GO:0005634">
    <property type="term" value="C:nucleus"/>
    <property type="evidence" value="ECO:0007005"/>
    <property type="project" value="FlyBase"/>
</dbReference>
<dbReference type="GO" id="GO:0005886">
    <property type="term" value="C:plasma membrane"/>
    <property type="evidence" value="ECO:0007005"/>
    <property type="project" value="FlyBase"/>
</dbReference>
<dbReference type="GO" id="GO:0140313">
    <property type="term" value="F:molecular sequestering activity"/>
    <property type="evidence" value="ECO:0000314"/>
    <property type="project" value="FlyBase"/>
</dbReference>
<dbReference type="GO" id="GO:0046982">
    <property type="term" value="F:protein heterodimerization activity"/>
    <property type="evidence" value="ECO:0000353"/>
    <property type="project" value="FlyBase"/>
</dbReference>
<dbReference type="GO" id="GO:0042803">
    <property type="term" value="F:protein homodimerization activity"/>
    <property type="evidence" value="ECO:0000314"/>
    <property type="project" value="FlyBase"/>
</dbReference>
<dbReference type="GO" id="GO:0001223">
    <property type="term" value="F:transcription coactivator binding"/>
    <property type="evidence" value="ECO:0000353"/>
    <property type="project" value="FlyBase"/>
</dbReference>
<dbReference type="GO" id="GO:0007059">
    <property type="term" value="P:chromosome segregation"/>
    <property type="evidence" value="ECO:0000315"/>
    <property type="project" value="FlyBase"/>
</dbReference>
<dbReference type="GO" id="GO:0007294">
    <property type="term" value="P:germarium-derived oocyte fate determination"/>
    <property type="evidence" value="ECO:0000316"/>
    <property type="project" value="FlyBase"/>
</dbReference>
<dbReference type="GO" id="GO:0007611">
    <property type="term" value="P:learning or memory"/>
    <property type="evidence" value="ECO:0000315"/>
    <property type="project" value="FlyBase"/>
</dbReference>
<dbReference type="GO" id="GO:0045448">
    <property type="term" value="P:mitotic cell cycle, embryonic"/>
    <property type="evidence" value="ECO:0000315"/>
    <property type="project" value="FlyBase"/>
</dbReference>
<dbReference type="GO" id="GO:0008103">
    <property type="term" value="P:oocyte microtubule cytoskeleton polarization"/>
    <property type="evidence" value="ECO:0000316"/>
    <property type="project" value="FlyBase"/>
</dbReference>
<dbReference type="GO" id="GO:0035332">
    <property type="term" value="P:positive regulation of hippo signaling"/>
    <property type="evidence" value="ECO:0000315"/>
    <property type="project" value="FlyBase"/>
</dbReference>
<dbReference type="GO" id="GO:0046579">
    <property type="term" value="P:positive regulation of Ras protein signal transduction"/>
    <property type="evidence" value="ECO:0007003"/>
    <property type="project" value="FlyBase"/>
</dbReference>
<dbReference type="GO" id="GO:0120176">
    <property type="term" value="P:positive regulation of torso signaling pathway"/>
    <property type="evidence" value="ECO:0000316"/>
    <property type="project" value="FlyBase"/>
</dbReference>
<dbReference type="GO" id="GO:0006457">
    <property type="term" value="P:protein folding"/>
    <property type="evidence" value="ECO:0000314"/>
    <property type="project" value="FlyBase"/>
</dbReference>
<dbReference type="GO" id="GO:0008104">
    <property type="term" value="P:protein localization"/>
    <property type="evidence" value="ECO:0000318"/>
    <property type="project" value="GO_Central"/>
</dbReference>
<dbReference type="GO" id="GO:0050821">
    <property type="term" value="P:protein stabilization"/>
    <property type="evidence" value="ECO:0000314"/>
    <property type="project" value="FlyBase"/>
</dbReference>
<dbReference type="GO" id="GO:0007460">
    <property type="term" value="P:R8 cell fate commitment"/>
    <property type="evidence" value="ECO:0000316"/>
    <property type="project" value="FlyBase"/>
</dbReference>
<dbReference type="GO" id="GO:0007165">
    <property type="term" value="P:signal transduction"/>
    <property type="evidence" value="ECO:0000318"/>
    <property type="project" value="GO_Central"/>
</dbReference>
<dbReference type="GO" id="GO:0040040">
    <property type="term" value="P:thermosensory behavior"/>
    <property type="evidence" value="ECO:0000315"/>
    <property type="project" value="FlyBase"/>
</dbReference>
<dbReference type="FunFam" id="1.20.190.20:FF:000001">
    <property type="entry name" value="14-3-3 gamma 1"/>
    <property type="match status" value="1"/>
</dbReference>
<dbReference type="Gene3D" id="1.20.190.20">
    <property type="entry name" value="14-3-3 domain"/>
    <property type="match status" value="1"/>
</dbReference>
<dbReference type="InterPro" id="IPR000308">
    <property type="entry name" value="14-3-3"/>
</dbReference>
<dbReference type="InterPro" id="IPR023409">
    <property type="entry name" value="14-3-3_CS"/>
</dbReference>
<dbReference type="InterPro" id="IPR036815">
    <property type="entry name" value="14-3-3_dom_sf"/>
</dbReference>
<dbReference type="InterPro" id="IPR023410">
    <property type="entry name" value="14-3-3_domain"/>
</dbReference>
<dbReference type="PANTHER" id="PTHR18860">
    <property type="entry name" value="14-3-3 PROTEIN"/>
    <property type="match status" value="1"/>
</dbReference>
<dbReference type="Pfam" id="PF00244">
    <property type="entry name" value="14-3-3"/>
    <property type="match status" value="1"/>
</dbReference>
<dbReference type="PIRSF" id="PIRSF000868">
    <property type="entry name" value="14-3-3"/>
    <property type="match status" value="1"/>
</dbReference>
<dbReference type="PRINTS" id="PR00305">
    <property type="entry name" value="1433ZETA"/>
</dbReference>
<dbReference type="SMART" id="SM00101">
    <property type="entry name" value="14_3_3"/>
    <property type="match status" value="1"/>
</dbReference>
<dbReference type="SUPFAM" id="SSF48445">
    <property type="entry name" value="14-3-3 protein"/>
    <property type="match status" value="1"/>
</dbReference>
<dbReference type="PROSITE" id="PS00796">
    <property type="entry name" value="1433_1"/>
    <property type="match status" value="1"/>
</dbReference>
<dbReference type="PROSITE" id="PS00797">
    <property type="entry name" value="1433_2"/>
    <property type="match status" value="1"/>
</dbReference>
<keyword id="KW-0025">Alternative splicing</keyword>
<keyword id="KW-0963">Cytoplasm</keyword>
<keyword id="KW-0217">Developmental protein</keyword>
<keyword id="KW-0221">Differentiation</keyword>
<keyword id="KW-0967">Endosome</keyword>
<keyword id="KW-0524">Neurogenesis</keyword>
<keyword id="KW-1185">Reference proteome</keyword>
<sequence>MSTVDKEELVQKAKLAEQSERYDDMAQAMKSVTETGVELSNEERNLLSVAYKNVVGARRSSWRVISSIEQKTEASARKQQLAREYRERVEKELREICYEVLGLLDKYLIPKASNPESKVFYLKMKGDYYRYLAEVATGDARNTVVDDSQTAYQDAFDISKGKMQPTHPIRLGLALNFSVFYYEILNSPDKACQLAKQAFDDAIAELDTLNEDSYKDSTLIMQLLRDNLTLWTSDTQGDEAEPQEGGDN</sequence>
<protein>
    <recommendedName>
        <fullName>14-3-3 protein zeta</fullName>
    </recommendedName>
    <alternativeName>
        <fullName>14-3-3-like protein</fullName>
    </alternativeName>
    <alternativeName>
        <fullName>Protein Leonardo</fullName>
    </alternativeName>
</protein>